<protein>
    <recommendedName>
        <fullName>Nuclear receptor subfamily 2 group C member 2</fullName>
    </recommendedName>
    <alternativeName>
        <fullName>Orphan nuclear receptor TAK1</fullName>
    </alternativeName>
    <alternativeName>
        <fullName>Orphan nuclear receptor TR4</fullName>
    </alternativeName>
    <alternativeName>
        <fullName>Testicular receptor 4</fullName>
    </alternativeName>
</protein>
<comment type="function">
    <text evidence="1 6 7 8 9 10 11 12">Orphan nuclear receptor that can act as a repressor or activator of transcription. An important repressor of nuclear receptor signaling pathways such as retinoic acid receptor, retinoid X, vitamin D3 receptor, thyroid hormone receptor and estrogen receptor pathways. May regulate gene expression during the late phase of spermatogenesis. Activates transcriptional activity of LHCG and is antagonist of PPARA-mediated transactivation (By similarity). Together with NR2C1, forms the core of the DRED (direct repeat erythroid-definitive) complex that represses embryonic and fetal globin transcription including that of GATA1. Binds to hormone response elements (HREs) consisting of two 5'-AGGTCA-3' half site direct repeat consensus sequences. Plays a fundamental role in early embryonic development and embryonic stem cells. Required for normal spermatogenesis and cerebellum development. Appears to be important for neurodevelopmentally regulated behavior.</text>
</comment>
<comment type="subunit">
    <text evidence="2 8">Homodimer; can bind DNA as homodimer (By similarity). Heterodimer; binds DNA as a heterodimer with NR2C1 required for chromatin remodeling and for binding to promoter regions such as globin DR1 repeats. Interacts with NR2C2AP; the interaction represses selective NR2C2-mediated transcriptional activity (By similarity). Interacts with PCAF; the interaction preferentially occurs on the non-phosphorylated form and induces NR2C2-mediated transactivation activity and does not require the ligand-binding domain (PubMed:16887930). Interacts (MAPK-mediated phosphorylated form) with NRIP1; the interaction promotes repression of NR2C2-mediated activity (PubMed:16887930). Interacts with NLRP10. Interacts (via ligand-binding region) with transcriptional corepressor JAZF1; the interaction promotes NR2C2-mediated transcriptional repression (By similarity).</text>
</comment>
<comment type="subcellular location">
    <subcellularLocation>
        <location evidence="3">Nucleus</location>
    </subcellularLocation>
</comment>
<comment type="tissue specificity">
    <text evidence="5 7 9">Expressed, during embryogenesis, in perichondrium, developing glomeruli structures and tubules of kidney, as well as in intestiinal villi. Also expressed in lung and hair follicles.</text>
</comment>
<comment type="induction">
    <text evidence="11">Induced by retinoic acid.</text>
</comment>
<comment type="PTM">
    <text evidence="8">Phosphorylation on Ser-19 and Ser-68 is an important regulator of NR2C2-mediated transcriptional activity. Phosphorylation on these residues recruits the corepressor, NRIP1, leading to transcripional repression, whereas the non-phosphorylated form preferentially recruits the coactivator, PCAF.</text>
</comment>
<comment type="disruption phenotype">
    <text evidence="7 9 11 12">Impaired spermatogenesis. Mutant animals have smaller cerebellums with disruption of lobes VI-VII. They exhibit a delay in monolayer maturation of dysmorphic calbindin 28K-positive Purkinje cells 7 days after birth. Deficiencies in acoustic startle response, prepulse startle inhibition, and social interactions were observed. Also responses to novel environmental situations are inhibited. NR2C1 and NR2C2 double knockout results in embryonic lethality around 7.5 dpc and increased apoptosis.</text>
</comment>
<comment type="similarity">
    <text evidence="13">Belongs to the nuclear hormone receptor family. NR2 subfamily.</text>
</comment>
<comment type="sequence caution" evidence="13">
    <conflict type="erroneous initiation">
        <sequence resource="EMBL-CDS" id="AAB33314"/>
    </conflict>
    <text>Extended N-terminus.</text>
</comment>
<comment type="sequence caution" evidence="13">
    <conflict type="erroneous initiation">
        <sequence resource="EMBL-CDS" id="AAC18408"/>
    </conflict>
    <text>Extended N-terminus.</text>
</comment>
<name>NR2C2_MOUSE</name>
<proteinExistence type="evidence at protein level"/>
<sequence length="596" mass="65239">MTSPSPRIQIISTDSAVASPQRIQIVTDQQTGQKIQIVTAVDASGSSKQQFILTSPDGAGTGKVILASPETSSAKQLIFTTSDNLVPGRIQIVTDSASVERLLGKADVQRPQVVEYCVVCGDKASGRHYGAVSCEGCKGFFKRSVRKNLTYSCRSSQDCIINKHHRNRCQFCRLKKCLEMGMKMESVQSERKPFDVQREKPSNCAASTEKIYIRKDLRSPLIATPTFVADKDGARQTGLLDPGMLVNIQQPLIREDGTVLLAADSKAETSQGALGTLANVVTSLANLSESLNNGDASEMQPEDQSASEITRAFDTLAKALNTTDSASPPSLADGIDASGGGSIHVISRDQSTPIIEVEGPLLSDTHVTFKLTMPSPMPEYLNVHYICESASRLLFLSMHWARSIPAFQALGQDCNTSLVRACWNELFTLGLAQCAQVMSLSTILAAIVNHLQNSIQEDKLSGDRIKQVMEHIWKLQEFCNSMAKLDIDGYEYAYLKAIVLFSPDHPGLTGTSQIEKFQEKAQMELQDYVQKTYSEDTYRLARILVRLPALRLMSSNITEELFFTGLIGNVSIDSIIPYILKMETAEYNGQITGASL</sequence>
<keyword id="KW-0007">Acetylation</keyword>
<keyword id="KW-0010">Activator</keyword>
<keyword id="KW-0221">Differentiation</keyword>
<keyword id="KW-0238">DNA-binding</keyword>
<keyword id="KW-1017">Isopeptide bond</keyword>
<keyword id="KW-0479">Metal-binding</keyword>
<keyword id="KW-0539">Nucleus</keyword>
<keyword id="KW-0597">Phosphoprotein</keyword>
<keyword id="KW-0675">Receptor</keyword>
<keyword id="KW-1185">Reference proteome</keyword>
<keyword id="KW-0678">Repressor</keyword>
<keyword id="KW-0744">Spermatogenesis</keyword>
<keyword id="KW-0804">Transcription</keyword>
<keyword id="KW-0805">Transcription regulation</keyword>
<keyword id="KW-0832">Ubl conjugation</keyword>
<keyword id="KW-0862">Zinc</keyword>
<keyword id="KW-0863">Zinc-finger</keyword>
<reference key="1">
    <citation type="journal article" date="1995" name="Gene">
        <title>Cloning of the gene encoding the murine orphan receptor TAK1 and cell-type-specific expression in testis.</title>
        <authorList>
            <person name="Hirose T."/>
            <person name="O'Brien D.A."/>
            <person name="Jetten A.M."/>
        </authorList>
    </citation>
    <scope>NUCLEOTIDE SEQUENCE [MRNA]</scope>
    <source>
        <strain>CD-1</strain>
    </source>
</reference>
<reference key="2">
    <citation type="journal article" date="1994" name="Gene Expr.">
        <title>Molecular cloning of a novel member of the nuclear receptor superfamily related to the orphan receptor, TR2.</title>
        <authorList>
            <person name="Law S.W."/>
            <person name="Conneely O.M."/>
            <person name="O'Malley B.W."/>
        </authorList>
    </citation>
    <scope>NUCLEOTIDE SEQUENCE [MRNA]</scope>
</reference>
<reference key="3">
    <citation type="submission" date="1996-01" db="EMBL/GenBank/DDBJ databases">
        <authorList>
            <person name="Young W.J."/>
            <person name="Smith S."/>
            <person name="Chang C."/>
        </authorList>
    </citation>
    <scope>NUCLEOTIDE SEQUENCE [MRNA]</scope>
    <source>
        <strain>C57BL/6J</strain>
        <tissue>Testis</tissue>
    </source>
</reference>
<reference key="4">
    <citation type="journal article" date="1999" name="J. Biol. Chem.">
        <title>Differential regulation of direct repeat 3 vitamin D3 and direct repeat 4 thyroid hormone signaling pathways by the human TR4 orphan receptor.</title>
        <authorList>
            <person name="Lee Y.F."/>
            <person name="Young W.J."/>
            <person name="Lin W.J."/>
            <person name="Shyr C.R."/>
            <person name="Chang C."/>
        </authorList>
    </citation>
    <scope>TISSUE SPECIFICITY</scope>
</reference>
<reference key="5">
    <citation type="journal article" date="2002" name="EMBO J.">
        <title>An embryonic/fetal beta-type globin gene repressor contains a nuclear receptor TR2/TR4 heterodimer.</title>
        <authorList>
            <person name="Tanabe O."/>
            <person name="Katsuoka F."/>
            <person name="Campbell A.D."/>
            <person name="Song W."/>
            <person name="Yamamoto M."/>
            <person name="Tanimoto K."/>
            <person name="Engel J.D."/>
        </authorList>
    </citation>
    <scope>IDENTIFICATION BY MASS SPECTROMETRY AS A COMPONENT OF THE DRED COMPLEX</scope>
    <scope>FUNCTION</scope>
    <scope>SUBCELLULAR LOCATION</scope>
    <scope>HETERODIMERIZATION</scope>
    <scope>DEVELOPMENTAL STAGE</scope>
</reference>
<reference key="6">
    <citation type="journal article" date="2004" name="Mol. Cell. Biol.">
        <title>Targeted inactivation of testicular nuclear orphan receptor 4 delays and disrupts late meiotic prophase and subsequent meiotic divisions of spermatogenesis.</title>
        <authorList>
            <person name="Mu X."/>
            <person name="Lee Y.F."/>
            <person name="Liu N.C."/>
            <person name="Chen Y.T."/>
            <person name="Kim E."/>
            <person name="Shyr C.R."/>
            <person name="Chang C."/>
        </authorList>
    </citation>
    <scope>DISRUPTION PHENOTYPE</scope>
    <scope>TISSUE SPECIFICITY</scope>
    <scope>DEVELOPMENTAL STAGE</scope>
    <scope>FUNCTION</scope>
</reference>
<reference key="7">
    <citation type="journal article" date="2006" name="Mol. Cell. Proteomics">
        <title>Modulation of testicular receptor 4 activity by mitogen-activated protein kinase-mediated phosphorylation.</title>
        <authorList>
            <person name="Huq M.D."/>
            <person name="Gupta P."/>
            <person name="Tsai N.P."/>
            <person name="Wei L.N."/>
        </authorList>
    </citation>
    <scope>PHOSPHORYLATION AT SER-19; SER-55 AND SER-68</scope>
    <scope>FUNCTION</scope>
    <scope>IDENTIFICATION BY MASS SPECTROMETRY</scope>
    <scope>INTERACTION WITH NRIP1 AND PCAF</scope>
    <scope>MUTAGENESIS OF SER-19; SER-55 AND SER-68</scope>
</reference>
<reference key="8">
    <citation type="journal article" date="2007" name="Brain Res.">
        <title>Abnormal cerebellar cytoarchitecture and impaired inhibitory signaling in adult mice lacking TR4 orphan nuclear receptor.</title>
        <authorList>
            <person name="Chen Y.T."/>
            <person name="Collins L.L."/>
            <person name="Uno H."/>
            <person name="Chou S.M."/>
            <person name="Meshul C.K."/>
            <person name="Chang S.S."/>
            <person name="Chang C."/>
        </authorList>
    </citation>
    <scope>DISRUPTION PHENOTYPE</scope>
    <scope>TISSUE SPECIFICITY</scope>
    <scope>FUNCTION</scope>
</reference>
<reference key="9">
    <citation type="journal article" date="2007" name="Genes Dev.">
        <title>The TR2 and TR4 orphan nuclear receptors repress Gata1 transcription.</title>
        <authorList>
            <person name="Tanabe O."/>
            <person name="Shen Y."/>
            <person name="Liu Q."/>
            <person name="Campbell A.D."/>
            <person name="Kuroha T."/>
            <person name="Yamamoto M."/>
            <person name="Engel J.D."/>
        </authorList>
    </citation>
    <scope>HETERODIMERIZATION</scope>
    <scope>FUNCTION</scope>
</reference>
<reference key="10">
    <citation type="journal article" date="2009" name="Endocrinology">
        <title>Roles of testicular orphan nuclear receptors 2 and 4 in early embryonic development and embryonic stem cells.</title>
        <authorList>
            <person name="Shyr C.R."/>
            <person name="Kang H.Y."/>
            <person name="Tsai M.Y."/>
            <person name="Liu N.C."/>
            <person name="Ku P.Y."/>
            <person name="Huang K.E."/>
            <person name="Chang C."/>
        </authorList>
    </citation>
    <scope>DISRUPTION PHENOTYPE</scope>
    <scope>INDUCTION</scope>
    <scope>FUNCTION</scope>
</reference>
<reference key="11">
    <citation type="journal article" date="2010" name="Cerebellum">
        <title>Altered cerebellar development in nuclear receptor TAK1/ TR4 null mice is associated with deficits in GLAST(+) glia, alterations in social behavior, motor learning, startle reactivity, and microglia.</title>
        <authorList>
            <person name="Kim Y.S."/>
            <person name="Harry G.J."/>
            <person name="Kang H.S."/>
            <person name="Goulding D."/>
            <person name="Wine R.N."/>
            <person name="Kissling G.E."/>
            <person name="Liao G."/>
            <person name="Jetten A.M."/>
        </authorList>
    </citation>
    <scope>DISRUPTION PHENOTYPE</scope>
    <scope>FUNCTION</scope>
</reference>
<reference key="12">
    <citation type="journal article" date="2013" name="Mol. Cell">
        <title>SIRT5-mediated lysine desuccinylation impacts diverse metabolic pathways.</title>
        <authorList>
            <person name="Park J."/>
            <person name="Chen Y."/>
            <person name="Tishkoff D.X."/>
            <person name="Peng C."/>
            <person name="Tan M."/>
            <person name="Dai L."/>
            <person name="Xie Z."/>
            <person name="Zhang Y."/>
            <person name="Zwaans B.M."/>
            <person name="Skinner M.E."/>
            <person name="Lombard D.B."/>
            <person name="Zhao Y."/>
        </authorList>
    </citation>
    <scope>ACETYLATION [LARGE SCALE ANALYSIS] AT LYS-231</scope>
    <scope>IDENTIFICATION BY MASS SPECTROMETRY [LARGE SCALE ANALYSIS]</scope>
    <source>
        <tissue>Embryonic fibroblast</tissue>
    </source>
</reference>
<evidence type="ECO:0000250" key="1"/>
<evidence type="ECO:0000250" key="2">
    <source>
        <dbReference type="UniProtKB" id="P49116"/>
    </source>
</evidence>
<evidence type="ECO:0000255" key="3">
    <source>
        <dbReference type="PROSITE-ProRule" id="PRU00407"/>
    </source>
</evidence>
<evidence type="ECO:0000255" key="4">
    <source>
        <dbReference type="PROSITE-ProRule" id="PRU01189"/>
    </source>
</evidence>
<evidence type="ECO:0000269" key="5">
    <source>
    </source>
</evidence>
<evidence type="ECO:0000269" key="6">
    <source>
    </source>
</evidence>
<evidence type="ECO:0000269" key="7">
    <source>
    </source>
</evidence>
<evidence type="ECO:0000269" key="8">
    <source>
    </source>
</evidence>
<evidence type="ECO:0000269" key="9">
    <source>
    </source>
</evidence>
<evidence type="ECO:0000269" key="10">
    <source>
    </source>
</evidence>
<evidence type="ECO:0000269" key="11">
    <source>
    </source>
</evidence>
<evidence type="ECO:0000269" key="12">
    <source>
    </source>
</evidence>
<evidence type="ECO:0000305" key="13"/>
<evidence type="ECO:0007744" key="14">
    <source>
    </source>
</evidence>
<accession>P49117</accession>
<accession>P55093</accession>
<feature type="chain" id="PRO_0000053589" description="Nuclear receptor subfamily 2 group C member 2">
    <location>
        <begin position="1"/>
        <end position="596"/>
    </location>
</feature>
<feature type="domain" description="NR LBD" evidence="4">
    <location>
        <begin position="341"/>
        <end position="583"/>
    </location>
</feature>
<feature type="DNA-binding region" description="Nuclear receptor" evidence="3">
    <location>
        <begin position="114"/>
        <end position="189"/>
    </location>
</feature>
<feature type="zinc finger region" description="NR C4-type" evidence="3">
    <location>
        <begin position="117"/>
        <end position="137"/>
    </location>
</feature>
<feature type="zinc finger region" description="NR C4-type" evidence="3">
    <location>
        <begin position="153"/>
        <end position="177"/>
    </location>
</feature>
<feature type="modified residue" description="Phosphoserine; by MAPK" evidence="8">
    <location>
        <position position="19"/>
    </location>
</feature>
<feature type="modified residue" description="Phosphoserine" evidence="2">
    <location>
        <position position="46"/>
    </location>
</feature>
<feature type="modified residue" description="Phosphoserine; by MAPK" evidence="8">
    <location>
        <position position="55"/>
    </location>
</feature>
<feature type="modified residue" description="Phosphoserine; by MAPK" evidence="8">
    <location>
        <position position="68"/>
    </location>
</feature>
<feature type="modified residue" description="Phosphoserine" evidence="2">
    <location>
        <position position="98"/>
    </location>
</feature>
<feature type="modified residue" description="Phosphoserine" evidence="2">
    <location>
        <position position="219"/>
    </location>
</feature>
<feature type="modified residue" description="N6-acetyllysine" evidence="14">
    <location>
        <position position="231"/>
    </location>
</feature>
<feature type="cross-link" description="Glycyl lysine isopeptide (Lys-Gly) (interchain with G-Cter in SUMO2)" evidence="2">
    <location>
        <position position="192"/>
    </location>
</feature>
<feature type="mutagenesis site" description="Enhanced transcriptional activation; Greatly enhanced transcriptional activation; when associated with A-68.">
    <original>S</original>
    <variation>A</variation>
    <location>
        <position position="15"/>
    </location>
</feature>
<feature type="mutagenesis site" description="Some repression of transcriptional activation; Repressed transcriptional activity by about 10-fold; when associated with E-68." evidence="8">
    <original>S</original>
    <variation>E</variation>
    <location>
        <position position="19"/>
    </location>
</feature>
<feature type="mutagenesis site" description="No effect on transcriptional activation." evidence="8">
    <original>S</original>
    <variation>A</variation>
    <location>
        <position position="55"/>
    </location>
</feature>
<feature type="mutagenesis site" description="Enhanced transcriptional activation; Greatly enhanced transcriptional activation; when associated with A-15." evidence="8">
    <original>S</original>
    <variation>A</variation>
    <location>
        <position position="68"/>
    </location>
</feature>
<feature type="mutagenesis site" description="Some repression of transcriptional activation; Repressed transcriptional activity by about 10-fold; when associated with E-19." evidence="8">
    <original>S</original>
    <variation>E</variation>
    <location>
        <position position="68"/>
    </location>
</feature>
<feature type="sequence conflict" description="In Ref. 2; AAC18408." evidence="13" ref="2">
    <original>G</original>
    <variation>E</variation>
    <location>
        <position position="60"/>
    </location>
</feature>
<feature type="sequence conflict" description="In Ref. 2; AAC18408." evidence="13" ref="2">
    <original>A</original>
    <variation>Q</variation>
    <location>
        <position position="106"/>
    </location>
</feature>
<feature type="sequence conflict" description="In Ref. 2; AAC18408." evidence="13" ref="2">
    <original>D</original>
    <variation>V</variation>
    <location>
        <position position="122"/>
    </location>
</feature>
<feature type="sequence conflict" description="In Ref. 2; AAC18408." evidence="13" ref="2">
    <original>N</original>
    <variation>K</variation>
    <location>
        <position position="247"/>
    </location>
</feature>
<feature type="sequence conflict" description="In Ref. 2; AAC18408." evidence="13" ref="2">
    <original>A</original>
    <variation>T</variation>
    <location>
        <position position="263"/>
    </location>
</feature>
<feature type="sequence conflict" description="In Ref. 2; AAC18408." evidence="13" ref="2">
    <original>T</original>
    <variation>I</variation>
    <location>
        <position position="323"/>
    </location>
</feature>
<feature type="sequence conflict" description="In Ref. 2; AAC18408." evidence="13" ref="2">
    <original>SP</original>
    <variation>CF</variation>
    <location>
        <begin position="327"/>
        <end position="328"/>
    </location>
</feature>
<feature type="sequence conflict" description="In Ref. 2; AAC18408." evidence="13" ref="2">
    <original>A</original>
    <variation>T</variation>
    <location>
        <position position="337"/>
    </location>
</feature>
<feature type="sequence conflict" description="In Ref. 2; AAC18408." evidence="13" ref="2">
    <original>KL</original>
    <variation>NW</variation>
    <location>
        <begin position="484"/>
        <end position="485"/>
    </location>
</feature>
<feature type="sequence conflict" description="In Ref. 2; AAC18408." evidence="13" ref="2">
    <original>G</original>
    <variation>S</variation>
    <location>
        <position position="510"/>
    </location>
</feature>
<gene>
    <name type="primary">Nr2c2</name>
    <name type="synonym">Mtr2r1</name>
    <name type="synonym">Tak1</name>
    <name type="synonym">Tr4</name>
</gene>
<organism>
    <name type="scientific">Mus musculus</name>
    <name type="common">Mouse</name>
    <dbReference type="NCBI Taxonomy" id="10090"/>
    <lineage>
        <taxon>Eukaryota</taxon>
        <taxon>Metazoa</taxon>
        <taxon>Chordata</taxon>
        <taxon>Craniata</taxon>
        <taxon>Vertebrata</taxon>
        <taxon>Euteleostomi</taxon>
        <taxon>Mammalia</taxon>
        <taxon>Eutheria</taxon>
        <taxon>Euarchontoglires</taxon>
        <taxon>Glires</taxon>
        <taxon>Rodentia</taxon>
        <taxon>Myomorpha</taxon>
        <taxon>Muroidea</taxon>
        <taxon>Muridae</taxon>
        <taxon>Murinae</taxon>
        <taxon>Mus</taxon>
        <taxon>Mus</taxon>
    </lineage>
</organism>
<dbReference type="EMBL" id="U11688">
    <property type="protein sequence ID" value="AAA93150.1"/>
    <property type="molecule type" value="mRNA"/>
</dbReference>
<dbReference type="EMBL" id="S75970">
    <property type="protein sequence ID" value="AAB33314.1"/>
    <property type="status" value="ALT_INIT"/>
    <property type="molecule type" value="mRNA"/>
</dbReference>
<dbReference type="EMBL" id="U32939">
    <property type="protein sequence ID" value="AAC18408.1"/>
    <property type="status" value="ALT_INIT"/>
    <property type="molecule type" value="mRNA"/>
</dbReference>
<dbReference type="CCDS" id="CCDS20372.1"/>
<dbReference type="PIR" id="I54075">
    <property type="entry name" value="I54075"/>
</dbReference>
<dbReference type="PIR" id="JC4299">
    <property type="entry name" value="JC4299"/>
</dbReference>
<dbReference type="RefSeq" id="NP_001334271.1">
    <property type="nucleotide sequence ID" value="NM_001347342.1"/>
</dbReference>
<dbReference type="RefSeq" id="NP_001397408.1">
    <property type="nucleotide sequence ID" value="NM_001410479.1"/>
</dbReference>
<dbReference type="RefSeq" id="NP_001397409.1">
    <property type="nucleotide sequence ID" value="NM_001410480.1"/>
</dbReference>
<dbReference type="RefSeq" id="NP_001397410.1">
    <property type="nucleotide sequence ID" value="NM_001410481.1"/>
</dbReference>
<dbReference type="RefSeq" id="NP_001397411.1">
    <property type="nucleotide sequence ID" value="NM_001410482.1"/>
</dbReference>
<dbReference type="RefSeq" id="NP_035760.1">
    <property type="nucleotide sequence ID" value="NM_011630.4"/>
</dbReference>
<dbReference type="RefSeq" id="XP_006505967.1">
    <property type="nucleotide sequence ID" value="XM_006505904.3"/>
</dbReference>
<dbReference type="RefSeq" id="XP_006505968.1">
    <property type="nucleotide sequence ID" value="XM_006505905.3"/>
</dbReference>
<dbReference type="RefSeq" id="XP_006505969.1">
    <property type="nucleotide sequence ID" value="XM_006505906.3"/>
</dbReference>
<dbReference type="BioGRID" id="204300">
    <property type="interactions" value="6"/>
</dbReference>
<dbReference type="FunCoup" id="P49117">
    <property type="interactions" value="3751"/>
</dbReference>
<dbReference type="IntAct" id="P49117">
    <property type="interactions" value="1"/>
</dbReference>
<dbReference type="MINT" id="P49117"/>
<dbReference type="STRING" id="10090.ENSMUSP00000109090"/>
<dbReference type="ChEMBL" id="CHEMBL4295769"/>
<dbReference type="GlyGen" id="P49117">
    <property type="glycosylation" value="1 site, 1 N-linked glycan (1 site)"/>
</dbReference>
<dbReference type="iPTMnet" id="P49117"/>
<dbReference type="PhosphoSitePlus" id="P49117"/>
<dbReference type="jPOST" id="P49117"/>
<dbReference type="PaxDb" id="10090-ENSMUSP00000109087"/>
<dbReference type="ProteomicsDB" id="293966"/>
<dbReference type="Pumba" id="P49117"/>
<dbReference type="Antibodypedia" id="1697">
    <property type="antibodies" value="510 antibodies from 40 providers"/>
</dbReference>
<dbReference type="DNASU" id="22026"/>
<dbReference type="Ensembl" id="ENSMUST00000113460.8">
    <property type="protein sequence ID" value="ENSMUSP00000109087.2"/>
    <property type="gene ID" value="ENSMUSG00000005893.15"/>
</dbReference>
<dbReference type="GeneID" id="22026"/>
<dbReference type="KEGG" id="mmu:22026"/>
<dbReference type="UCSC" id="uc009cyp.2">
    <property type="organism name" value="mouse"/>
</dbReference>
<dbReference type="AGR" id="MGI:1352466"/>
<dbReference type="CTD" id="7182"/>
<dbReference type="MGI" id="MGI:1352466">
    <property type="gene designation" value="Nr2c2"/>
</dbReference>
<dbReference type="VEuPathDB" id="HostDB:ENSMUSG00000005893"/>
<dbReference type="eggNOG" id="KOG3575">
    <property type="taxonomic scope" value="Eukaryota"/>
</dbReference>
<dbReference type="GeneTree" id="ENSGT00940000158393"/>
<dbReference type="HOGENOM" id="CLU_007368_16_2_1"/>
<dbReference type="InParanoid" id="P49117"/>
<dbReference type="OMA" id="IHWARSI"/>
<dbReference type="OrthoDB" id="10024684at2759"/>
<dbReference type="PhylomeDB" id="P49117"/>
<dbReference type="TreeFam" id="TF316650"/>
<dbReference type="Reactome" id="R-MMU-383280">
    <property type="pathway name" value="Nuclear Receptor transcription pathway"/>
</dbReference>
<dbReference type="BioGRID-ORCS" id="22026">
    <property type="hits" value="1 hit in 76 CRISPR screens"/>
</dbReference>
<dbReference type="ChiTaRS" id="Nr2c2">
    <property type="organism name" value="mouse"/>
</dbReference>
<dbReference type="PRO" id="PR:P49117"/>
<dbReference type="Proteomes" id="UP000000589">
    <property type="component" value="Chromosome 6"/>
</dbReference>
<dbReference type="RNAct" id="P49117">
    <property type="molecule type" value="protein"/>
</dbReference>
<dbReference type="Bgee" id="ENSMUSG00000005893">
    <property type="expression patterns" value="Expressed in rostral migratory stream and 248 other cell types or tissues"/>
</dbReference>
<dbReference type="ExpressionAtlas" id="P49117">
    <property type="expression patterns" value="baseline and differential"/>
</dbReference>
<dbReference type="GO" id="GO:0005634">
    <property type="term" value="C:nucleus"/>
    <property type="evidence" value="ECO:0007669"/>
    <property type="project" value="UniProtKB-SubCell"/>
</dbReference>
<dbReference type="GO" id="GO:0003700">
    <property type="term" value="F:DNA-binding transcription factor activity"/>
    <property type="evidence" value="ECO:0007669"/>
    <property type="project" value="InterPro"/>
</dbReference>
<dbReference type="GO" id="GO:0043565">
    <property type="term" value="F:sequence-specific DNA binding"/>
    <property type="evidence" value="ECO:0007669"/>
    <property type="project" value="InterPro"/>
</dbReference>
<dbReference type="GO" id="GO:0008270">
    <property type="term" value="F:zinc ion binding"/>
    <property type="evidence" value="ECO:0007669"/>
    <property type="project" value="UniProtKB-KW"/>
</dbReference>
<dbReference type="GO" id="GO:0030154">
    <property type="term" value="P:cell differentiation"/>
    <property type="evidence" value="ECO:0007669"/>
    <property type="project" value="UniProtKB-KW"/>
</dbReference>
<dbReference type="GO" id="GO:0021549">
    <property type="term" value="P:cerebellum development"/>
    <property type="evidence" value="ECO:0000315"/>
    <property type="project" value="UniProtKB"/>
</dbReference>
<dbReference type="GO" id="GO:0031663">
    <property type="term" value="P:lipopolysaccharide-mediated signaling pathway"/>
    <property type="evidence" value="ECO:0000315"/>
    <property type="project" value="MGI"/>
</dbReference>
<dbReference type="GO" id="GO:0051321">
    <property type="term" value="P:meiotic cell cycle"/>
    <property type="evidence" value="ECO:0000315"/>
    <property type="project" value="MGI"/>
</dbReference>
<dbReference type="GO" id="GO:0038066">
    <property type="term" value="P:p38MAPK cascade"/>
    <property type="evidence" value="ECO:0000270"/>
    <property type="project" value="CACAO"/>
</dbReference>
<dbReference type="GO" id="GO:0048520">
    <property type="term" value="P:positive regulation of behavior"/>
    <property type="evidence" value="ECO:0000315"/>
    <property type="project" value="UniProtKB"/>
</dbReference>
<dbReference type="GO" id="GO:0040019">
    <property type="term" value="P:positive regulation of embryonic development"/>
    <property type="evidence" value="ECO:0000315"/>
    <property type="project" value="UniProtKB"/>
</dbReference>
<dbReference type="GO" id="GO:0045663">
    <property type="term" value="P:positive regulation of myoblast differentiation"/>
    <property type="evidence" value="ECO:0000314"/>
    <property type="project" value="CACAO"/>
</dbReference>
<dbReference type="GO" id="GO:0007283">
    <property type="term" value="P:spermatogenesis"/>
    <property type="evidence" value="ECO:0000315"/>
    <property type="project" value="MGI"/>
</dbReference>
<dbReference type="CDD" id="cd06967">
    <property type="entry name" value="NR_DBD_TR2_like"/>
    <property type="match status" value="1"/>
</dbReference>
<dbReference type="CDD" id="cd06952">
    <property type="entry name" value="NR_LBD_TR2_like"/>
    <property type="match status" value="1"/>
</dbReference>
<dbReference type="FunFam" id="1.10.565.10:FF:000012">
    <property type="entry name" value="Nuclear receptor subfamily 2 group C member 1"/>
    <property type="match status" value="1"/>
</dbReference>
<dbReference type="FunFam" id="3.30.50.10:FF:000015">
    <property type="entry name" value="Nuclear receptor subfamily 2, group C, member 1"/>
    <property type="match status" value="1"/>
</dbReference>
<dbReference type="Gene3D" id="3.30.50.10">
    <property type="entry name" value="Erythroid Transcription Factor GATA-1, subunit A"/>
    <property type="match status" value="1"/>
</dbReference>
<dbReference type="Gene3D" id="1.10.565.10">
    <property type="entry name" value="Retinoid X Receptor"/>
    <property type="match status" value="1"/>
</dbReference>
<dbReference type="InterPro" id="IPR035500">
    <property type="entry name" value="NHR-like_dom_sf"/>
</dbReference>
<dbReference type="InterPro" id="IPR048245">
    <property type="entry name" value="NR2C1/2-like_DBD"/>
</dbReference>
<dbReference type="InterPro" id="IPR048246">
    <property type="entry name" value="NR2C1/2-like_LBD"/>
</dbReference>
<dbReference type="InterPro" id="IPR000536">
    <property type="entry name" value="Nucl_hrmn_rcpt_lig-bd"/>
</dbReference>
<dbReference type="InterPro" id="IPR050274">
    <property type="entry name" value="Nuclear_hormone_rcpt_NR2"/>
</dbReference>
<dbReference type="InterPro" id="IPR001723">
    <property type="entry name" value="Nuclear_hrmn_rcpt"/>
</dbReference>
<dbReference type="InterPro" id="IPR001628">
    <property type="entry name" value="Znf_hrmn_rcpt"/>
</dbReference>
<dbReference type="InterPro" id="IPR013088">
    <property type="entry name" value="Znf_NHR/GATA"/>
</dbReference>
<dbReference type="PANTHER" id="PTHR24083">
    <property type="entry name" value="NUCLEAR HORMONE RECEPTOR"/>
    <property type="match status" value="1"/>
</dbReference>
<dbReference type="Pfam" id="PF00104">
    <property type="entry name" value="Hormone_recep"/>
    <property type="match status" value="1"/>
</dbReference>
<dbReference type="Pfam" id="PF00105">
    <property type="entry name" value="zf-C4"/>
    <property type="match status" value="1"/>
</dbReference>
<dbReference type="PRINTS" id="PR00398">
    <property type="entry name" value="STRDHORMONER"/>
</dbReference>
<dbReference type="PRINTS" id="PR00047">
    <property type="entry name" value="STROIDFINGER"/>
</dbReference>
<dbReference type="SMART" id="SM00430">
    <property type="entry name" value="HOLI"/>
    <property type="match status" value="1"/>
</dbReference>
<dbReference type="SMART" id="SM00399">
    <property type="entry name" value="ZnF_C4"/>
    <property type="match status" value="1"/>
</dbReference>
<dbReference type="SUPFAM" id="SSF57716">
    <property type="entry name" value="Glucocorticoid receptor-like (DNA-binding domain)"/>
    <property type="match status" value="1"/>
</dbReference>
<dbReference type="SUPFAM" id="SSF48508">
    <property type="entry name" value="Nuclear receptor ligand-binding domain"/>
    <property type="match status" value="1"/>
</dbReference>
<dbReference type="PROSITE" id="PS51843">
    <property type="entry name" value="NR_LBD"/>
    <property type="match status" value="1"/>
</dbReference>
<dbReference type="PROSITE" id="PS00031">
    <property type="entry name" value="NUCLEAR_REC_DBD_1"/>
    <property type="match status" value="1"/>
</dbReference>
<dbReference type="PROSITE" id="PS51030">
    <property type="entry name" value="NUCLEAR_REC_DBD_2"/>
    <property type="match status" value="1"/>
</dbReference>